<proteinExistence type="inferred from homology"/>
<organism>
    <name type="scientific">Mycolicibacterium gilvum (strain PYR-GCK)</name>
    <name type="common">Mycobacterium gilvum (strain PYR-GCK)</name>
    <dbReference type="NCBI Taxonomy" id="350054"/>
    <lineage>
        <taxon>Bacteria</taxon>
        <taxon>Bacillati</taxon>
        <taxon>Actinomycetota</taxon>
        <taxon>Actinomycetes</taxon>
        <taxon>Mycobacteriales</taxon>
        <taxon>Mycobacteriaceae</taxon>
        <taxon>Mycolicibacterium</taxon>
    </lineage>
</organism>
<dbReference type="EC" id="1.17.1.8" evidence="1"/>
<dbReference type="EMBL" id="CP000656">
    <property type="protein sequence ID" value="ABP46483.1"/>
    <property type="molecule type" value="Genomic_DNA"/>
</dbReference>
<dbReference type="SMR" id="A4TCI6"/>
<dbReference type="STRING" id="350054.Mflv_4013"/>
<dbReference type="KEGG" id="mgi:Mflv_4013"/>
<dbReference type="eggNOG" id="COG0289">
    <property type="taxonomic scope" value="Bacteria"/>
</dbReference>
<dbReference type="HOGENOM" id="CLU_047479_0_1_11"/>
<dbReference type="OrthoDB" id="9790352at2"/>
<dbReference type="UniPathway" id="UPA00034">
    <property type="reaction ID" value="UER00018"/>
</dbReference>
<dbReference type="GO" id="GO:0005829">
    <property type="term" value="C:cytosol"/>
    <property type="evidence" value="ECO:0007669"/>
    <property type="project" value="TreeGrafter"/>
</dbReference>
<dbReference type="GO" id="GO:0008839">
    <property type="term" value="F:4-hydroxy-tetrahydrodipicolinate reductase"/>
    <property type="evidence" value="ECO:0007669"/>
    <property type="project" value="UniProtKB-EC"/>
</dbReference>
<dbReference type="GO" id="GO:0051287">
    <property type="term" value="F:NAD binding"/>
    <property type="evidence" value="ECO:0007669"/>
    <property type="project" value="UniProtKB-UniRule"/>
</dbReference>
<dbReference type="GO" id="GO:0050661">
    <property type="term" value="F:NADP binding"/>
    <property type="evidence" value="ECO:0007669"/>
    <property type="project" value="UniProtKB-UniRule"/>
</dbReference>
<dbReference type="GO" id="GO:0016726">
    <property type="term" value="F:oxidoreductase activity, acting on CH or CH2 groups, NAD or NADP as acceptor"/>
    <property type="evidence" value="ECO:0007669"/>
    <property type="project" value="UniProtKB-UniRule"/>
</dbReference>
<dbReference type="GO" id="GO:0019877">
    <property type="term" value="P:diaminopimelate biosynthetic process"/>
    <property type="evidence" value="ECO:0007669"/>
    <property type="project" value="UniProtKB-UniRule"/>
</dbReference>
<dbReference type="GO" id="GO:0009089">
    <property type="term" value="P:lysine biosynthetic process via diaminopimelate"/>
    <property type="evidence" value="ECO:0007669"/>
    <property type="project" value="UniProtKB-UniRule"/>
</dbReference>
<dbReference type="CDD" id="cd02274">
    <property type="entry name" value="DHDPR_N"/>
    <property type="match status" value="1"/>
</dbReference>
<dbReference type="FunFam" id="3.30.360.10:FF:000009">
    <property type="entry name" value="4-hydroxy-tetrahydrodipicolinate reductase"/>
    <property type="match status" value="1"/>
</dbReference>
<dbReference type="Gene3D" id="3.30.360.10">
    <property type="entry name" value="Dihydrodipicolinate Reductase, domain 2"/>
    <property type="match status" value="1"/>
</dbReference>
<dbReference type="Gene3D" id="3.40.50.720">
    <property type="entry name" value="NAD(P)-binding Rossmann-like Domain"/>
    <property type="match status" value="1"/>
</dbReference>
<dbReference type="HAMAP" id="MF_00102">
    <property type="entry name" value="DapB"/>
    <property type="match status" value="1"/>
</dbReference>
<dbReference type="InterPro" id="IPR022663">
    <property type="entry name" value="DapB_C"/>
</dbReference>
<dbReference type="InterPro" id="IPR000846">
    <property type="entry name" value="DapB_N"/>
</dbReference>
<dbReference type="InterPro" id="IPR022664">
    <property type="entry name" value="DapB_N_CS"/>
</dbReference>
<dbReference type="InterPro" id="IPR023940">
    <property type="entry name" value="DHDPR_bac"/>
</dbReference>
<dbReference type="InterPro" id="IPR036291">
    <property type="entry name" value="NAD(P)-bd_dom_sf"/>
</dbReference>
<dbReference type="NCBIfam" id="TIGR00036">
    <property type="entry name" value="dapB"/>
    <property type="match status" value="1"/>
</dbReference>
<dbReference type="PANTHER" id="PTHR20836:SF0">
    <property type="entry name" value="4-HYDROXY-TETRAHYDRODIPICOLINATE REDUCTASE 1, CHLOROPLASTIC-RELATED"/>
    <property type="match status" value="1"/>
</dbReference>
<dbReference type="PANTHER" id="PTHR20836">
    <property type="entry name" value="DIHYDRODIPICOLINATE REDUCTASE"/>
    <property type="match status" value="1"/>
</dbReference>
<dbReference type="Pfam" id="PF05173">
    <property type="entry name" value="DapB_C"/>
    <property type="match status" value="1"/>
</dbReference>
<dbReference type="Pfam" id="PF01113">
    <property type="entry name" value="DapB_N"/>
    <property type="match status" value="1"/>
</dbReference>
<dbReference type="PIRSF" id="PIRSF000161">
    <property type="entry name" value="DHPR"/>
    <property type="match status" value="1"/>
</dbReference>
<dbReference type="SUPFAM" id="SSF55347">
    <property type="entry name" value="Glyceraldehyde-3-phosphate dehydrogenase-like, C-terminal domain"/>
    <property type="match status" value="1"/>
</dbReference>
<dbReference type="SUPFAM" id="SSF51735">
    <property type="entry name" value="NAD(P)-binding Rossmann-fold domains"/>
    <property type="match status" value="1"/>
</dbReference>
<dbReference type="PROSITE" id="PS01298">
    <property type="entry name" value="DAPB"/>
    <property type="match status" value="1"/>
</dbReference>
<protein>
    <recommendedName>
        <fullName evidence="1">4-hydroxy-tetrahydrodipicolinate reductase</fullName>
        <shortName evidence="1">HTPA reductase</shortName>
        <ecNumber evidence="1">1.17.1.8</ecNumber>
    </recommendedName>
</protein>
<feature type="chain" id="PRO_1000075682" description="4-hydroxy-tetrahydrodipicolinate reductase">
    <location>
        <begin position="1"/>
        <end position="245"/>
    </location>
</feature>
<feature type="active site" description="Proton donor/acceptor" evidence="1">
    <location>
        <position position="132"/>
    </location>
</feature>
<feature type="active site" description="Proton donor" evidence="1">
    <location>
        <position position="136"/>
    </location>
</feature>
<feature type="binding site" evidence="1">
    <location>
        <begin position="7"/>
        <end position="12"/>
    </location>
    <ligand>
        <name>NAD(+)</name>
        <dbReference type="ChEBI" id="CHEBI:57540"/>
    </ligand>
</feature>
<feature type="binding site" evidence="1">
    <location>
        <begin position="75"/>
        <end position="77"/>
    </location>
    <ligand>
        <name>NAD(+)</name>
        <dbReference type="ChEBI" id="CHEBI:57540"/>
    </ligand>
</feature>
<feature type="binding site" evidence="1">
    <location>
        <begin position="102"/>
        <end position="105"/>
    </location>
    <ligand>
        <name>NAD(+)</name>
        <dbReference type="ChEBI" id="CHEBI:57540"/>
    </ligand>
</feature>
<feature type="binding site" evidence="1">
    <location>
        <position position="133"/>
    </location>
    <ligand>
        <name>(S)-2,3,4,5-tetrahydrodipicolinate</name>
        <dbReference type="ChEBI" id="CHEBI:16845"/>
    </ligand>
</feature>
<feature type="binding site" evidence="1">
    <location>
        <begin position="142"/>
        <end position="143"/>
    </location>
    <ligand>
        <name>(S)-2,3,4,5-tetrahydrodipicolinate</name>
        <dbReference type="ChEBI" id="CHEBI:16845"/>
    </ligand>
</feature>
<keyword id="KW-0028">Amino-acid biosynthesis</keyword>
<keyword id="KW-0963">Cytoplasm</keyword>
<keyword id="KW-0220">Diaminopimelate biosynthesis</keyword>
<keyword id="KW-0457">Lysine biosynthesis</keyword>
<keyword id="KW-0520">NAD</keyword>
<keyword id="KW-0521">NADP</keyword>
<keyword id="KW-0560">Oxidoreductase</keyword>
<name>DAPB_MYCGI</name>
<gene>
    <name evidence="1" type="primary">dapB</name>
    <name type="ordered locus">Mflv_4013</name>
</gene>
<reference key="1">
    <citation type="submission" date="2007-04" db="EMBL/GenBank/DDBJ databases">
        <title>Complete sequence of chromosome of Mycobacterium gilvum PYR-GCK.</title>
        <authorList>
            <consortium name="US DOE Joint Genome Institute"/>
            <person name="Copeland A."/>
            <person name="Lucas S."/>
            <person name="Lapidus A."/>
            <person name="Barry K."/>
            <person name="Detter J.C."/>
            <person name="Glavina del Rio T."/>
            <person name="Hammon N."/>
            <person name="Israni S."/>
            <person name="Dalin E."/>
            <person name="Tice H."/>
            <person name="Pitluck S."/>
            <person name="Chain P."/>
            <person name="Malfatti S."/>
            <person name="Shin M."/>
            <person name="Vergez L."/>
            <person name="Schmutz J."/>
            <person name="Larimer F."/>
            <person name="Land M."/>
            <person name="Hauser L."/>
            <person name="Kyrpides N."/>
            <person name="Mikhailova N."/>
            <person name="Miller C."/>
            <person name="Richardson P."/>
        </authorList>
    </citation>
    <scope>NUCLEOTIDE SEQUENCE [LARGE SCALE GENOMIC DNA]</scope>
    <source>
        <strain>PYR-GCK</strain>
    </source>
</reference>
<comment type="function">
    <text evidence="1">Catalyzes the conversion of 4-hydroxy-tetrahydrodipicolinate (HTPA) to tetrahydrodipicolinate.</text>
</comment>
<comment type="catalytic activity">
    <reaction evidence="1">
        <text>(S)-2,3,4,5-tetrahydrodipicolinate + NAD(+) + H2O = (2S,4S)-4-hydroxy-2,3,4,5-tetrahydrodipicolinate + NADH + H(+)</text>
        <dbReference type="Rhea" id="RHEA:35323"/>
        <dbReference type="ChEBI" id="CHEBI:15377"/>
        <dbReference type="ChEBI" id="CHEBI:15378"/>
        <dbReference type="ChEBI" id="CHEBI:16845"/>
        <dbReference type="ChEBI" id="CHEBI:57540"/>
        <dbReference type="ChEBI" id="CHEBI:57945"/>
        <dbReference type="ChEBI" id="CHEBI:67139"/>
        <dbReference type="EC" id="1.17.1.8"/>
    </reaction>
</comment>
<comment type="catalytic activity">
    <reaction evidence="1">
        <text>(S)-2,3,4,5-tetrahydrodipicolinate + NADP(+) + H2O = (2S,4S)-4-hydroxy-2,3,4,5-tetrahydrodipicolinate + NADPH + H(+)</text>
        <dbReference type="Rhea" id="RHEA:35331"/>
        <dbReference type="ChEBI" id="CHEBI:15377"/>
        <dbReference type="ChEBI" id="CHEBI:15378"/>
        <dbReference type="ChEBI" id="CHEBI:16845"/>
        <dbReference type="ChEBI" id="CHEBI:57783"/>
        <dbReference type="ChEBI" id="CHEBI:58349"/>
        <dbReference type="ChEBI" id="CHEBI:67139"/>
        <dbReference type="EC" id="1.17.1.8"/>
    </reaction>
</comment>
<comment type="pathway">
    <text evidence="1">Amino-acid biosynthesis; L-lysine biosynthesis via DAP pathway; (S)-tetrahydrodipicolinate from L-aspartate: step 4/4.</text>
</comment>
<comment type="subcellular location">
    <subcellularLocation>
        <location evidence="1">Cytoplasm</location>
    </subcellularLocation>
</comment>
<comment type="similarity">
    <text evidence="1">Belongs to the DapB family.</text>
</comment>
<comment type="caution">
    <text evidence="2">Was originally thought to be a dihydrodipicolinate reductase (DHDPR), catalyzing the conversion of dihydrodipicolinate to tetrahydrodipicolinate. However, it was shown in E.coli that the substrate of the enzymatic reaction is not dihydrodipicolinate (DHDP) but in fact (2S,4S)-4-hydroxy-2,3,4,5-tetrahydrodipicolinic acid (HTPA), the product released by the DapA-catalyzed reaction.</text>
</comment>
<sequence length="245" mass="25883">MRVGVLGAKGKVGATMVAGVQAAEDLTFTTGIDAGDPLSALVDTDTEVVIDFTHPDVVMDNLKFLIENGIHAVVGTTGFTDERLDQVRKWLEAKPDVSVLIAPNFAIGAVLSMHFAQQAAKHFESVEVIELHHPHKADAPSGTAARTARLIAEARKGMPPNPDATSTGLEGARGADVDGVPVHSIRLAGLVAHQEVLFGTLGETLTIRHDSIDRTSFVPGVLLAVRKIRENPGLTIGIESLLDLA</sequence>
<accession>A4TCI6</accession>
<evidence type="ECO:0000255" key="1">
    <source>
        <dbReference type="HAMAP-Rule" id="MF_00102"/>
    </source>
</evidence>
<evidence type="ECO:0000305" key="2"/>